<gene>
    <name type="primary">alr</name>
    <name type="ordered locus">GSU0606</name>
</gene>
<reference key="1">
    <citation type="journal article" date="2003" name="Science">
        <title>Genome of Geobacter sulfurreducens: metal reduction in subsurface environments.</title>
        <authorList>
            <person name="Methe B.A."/>
            <person name="Nelson K.E."/>
            <person name="Eisen J.A."/>
            <person name="Paulsen I.T."/>
            <person name="Nelson W.C."/>
            <person name="Heidelberg J.F."/>
            <person name="Wu D."/>
            <person name="Wu M."/>
            <person name="Ward N.L."/>
            <person name="Beanan M.J."/>
            <person name="Dodson R.J."/>
            <person name="Madupu R."/>
            <person name="Brinkac L.M."/>
            <person name="Daugherty S.C."/>
            <person name="DeBoy R.T."/>
            <person name="Durkin A.S."/>
            <person name="Gwinn M.L."/>
            <person name="Kolonay J.F."/>
            <person name="Sullivan S.A."/>
            <person name="Haft D.H."/>
            <person name="Selengut J."/>
            <person name="Davidsen T.M."/>
            <person name="Zafar N."/>
            <person name="White O."/>
            <person name="Tran B."/>
            <person name="Romero C."/>
            <person name="Forberger H.A."/>
            <person name="Weidman J.F."/>
            <person name="Khouri H.M."/>
            <person name="Feldblyum T.V."/>
            <person name="Utterback T.R."/>
            <person name="Van Aken S.E."/>
            <person name="Lovley D.R."/>
            <person name="Fraser C.M."/>
        </authorList>
    </citation>
    <scope>NUCLEOTIDE SEQUENCE [LARGE SCALE GENOMIC DNA]</scope>
    <source>
        <strain>ATCC 51573 / DSM 12127 / PCA</strain>
    </source>
</reference>
<accession>Q74FK2</accession>
<organism>
    <name type="scientific">Geobacter sulfurreducens (strain ATCC 51573 / DSM 12127 / PCA)</name>
    <dbReference type="NCBI Taxonomy" id="243231"/>
    <lineage>
        <taxon>Bacteria</taxon>
        <taxon>Pseudomonadati</taxon>
        <taxon>Thermodesulfobacteriota</taxon>
        <taxon>Desulfuromonadia</taxon>
        <taxon>Geobacterales</taxon>
        <taxon>Geobacteraceae</taxon>
        <taxon>Geobacter</taxon>
    </lineage>
</organism>
<dbReference type="EC" id="5.1.1.1" evidence="1"/>
<dbReference type="EMBL" id="AE017180">
    <property type="protein sequence ID" value="AAR33937.1"/>
    <property type="molecule type" value="Genomic_DNA"/>
</dbReference>
<dbReference type="RefSeq" id="NP_951664.1">
    <property type="nucleotide sequence ID" value="NC_002939.5"/>
</dbReference>
<dbReference type="RefSeq" id="WP_010941268.1">
    <property type="nucleotide sequence ID" value="NC_002939.5"/>
</dbReference>
<dbReference type="SMR" id="Q74FK2"/>
<dbReference type="FunCoup" id="Q74FK2">
    <property type="interactions" value="407"/>
</dbReference>
<dbReference type="STRING" id="243231.GSU0606"/>
<dbReference type="EnsemblBacteria" id="AAR33937">
    <property type="protein sequence ID" value="AAR33937"/>
    <property type="gene ID" value="GSU0606"/>
</dbReference>
<dbReference type="KEGG" id="gsu:GSU0606"/>
<dbReference type="PATRIC" id="fig|243231.5.peg.605"/>
<dbReference type="eggNOG" id="COG0787">
    <property type="taxonomic scope" value="Bacteria"/>
</dbReference>
<dbReference type="HOGENOM" id="CLU_028393_2_2_7"/>
<dbReference type="InParanoid" id="Q74FK2"/>
<dbReference type="OrthoDB" id="9813814at2"/>
<dbReference type="UniPathway" id="UPA00042">
    <property type="reaction ID" value="UER00497"/>
</dbReference>
<dbReference type="Proteomes" id="UP000000577">
    <property type="component" value="Chromosome"/>
</dbReference>
<dbReference type="GO" id="GO:0005829">
    <property type="term" value="C:cytosol"/>
    <property type="evidence" value="ECO:0000318"/>
    <property type="project" value="GO_Central"/>
</dbReference>
<dbReference type="GO" id="GO:0008784">
    <property type="term" value="F:alanine racemase activity"/>
    <property type="evidence" value="ECO:0000318"/>
    <property type="project" value="GO_Central"/>
</dbReference>
<dbReference type="GO" id="GO:0030170">
    <property type="term" value="F:pyridoxal phosphate binding"/>
    <property type="evidence" value="ECO:0000318"/>
    <property type="project" value="GO_Central"/>
</dbReference>
<dbReference type="GO" id="GO:0030632">
    <property type="term" value="P:D-alanine biosynthetic process"/>
    <property type="evidence" value="ECO:0000318"/>
    <property type="project" value="GO_Central"/>
</dbReference>
<dbReference type="CDD" id="cd00430">
    <property type="entry name" value="PLPDE_III_AR"/>
    <property type="match status" value="1"/>
</dbReference>
<dbReference type="FunFam" id="3.20.20.10:FF:000002">
    <property type="entry name" value="Alanine racemase"/>
    <property type="match status" value="1"/>
</dbReference>
<dbReference type="Gene3D" id="3.20.20.10">
    <property type="entry name" value="Alanine racemase"/>
    <property type="match status" value="1"/>
</dbReference>
<dbReference type="Gene3D" id="2.40.37.10">
    <property type="entry name" value="Lyase, Ornithine Decarboxylase, Chain A, domain 1"/>
    <property type="match status" value="1"/>
</dbReference>
<dbReference type="HAMAP" id="MF_01201">
    <property type="entry name" value="Ala_racemase"/>
    <property type="match status" value="1"/>
</dbReference>
<dbReference type="InterPro" id="IPR000821">
    <property type="entry name" value="Ala_racemase"/>
</dbReference>
<dbReference type="InterPro" id="IPR009006">
    <property type="entry name" value="Ala_racemase/Decarboxylase_C"/>
</dbReference>
<dbReference type="InterPro" id="IPR011079">
    <property type="entry name" value="Ala_racemase_C"/>
</dbReference>
<dbReference type="InterPro" id="IPR001608">
    <property type="entry name" value="Ala_racemase_N"/>
</dbReference>
<dbReference type="InterPro" id="IPR020622">
    <property type="entry name" value="Ala_racemase_pyridoxalP-BS"/>
</dbReference>
<dbReference type="InterPro" id="IPR029066">
    <property type="entry name" value="PLP-binding_barrel"/>
</dbReference>
<dbReference type="NCBIfam" id="TIGR00492">
    <property type="entry name" value="alr"/>
    <property type="match status" value="1"/>
</dbReference>
<dbReference type="PANTHER" id="PTHR30511">
    <property type="entry name" value="ALANINE RACEMASE"/>
    <property type="match status" value="1"/>
</dbReference>
<dbReference type="PANTHER" id="PTHR30511:SF0">
    <property type="entry name" value="ALANINE RACEMASE, CATABOLIC-RELATED"/>
    <property type="match status" value="1"/>
</dbReference>
<dbReference type="Pfam" id="PF00842">
    <property type="entry name" value="Ala_racemase_C"/>
    <property type="match status" value="1"/>
</dbReference>
<dbReference type="Pfam" id="PF01168">
    <property type="entry name" value="Ala_racemase_N"/>
    <property type="match status" value="1"/>
</dbReference>
<dbReference type="PRINTS" id="PR00992">
    <property type="entry name" value="ALARACEMASE"/>
</dbReference>
<dbReference type="SMART" id="SM01005">
    <property type="entry name" value="Ala_racemase_C"/>
    <property type="match status" value="1"/>
</dbReference>
<dbReference type="SUPFAM" id="SSF50621">
    <property type="entry name" value="Alanine racemase C-terminal domain-like"/>
    <property type="match status" value="1"/>
</dbReference>
<dbReference type="SUPFAM" id="SSF51419">
    <property type="entry name" value="PLP-binding barrel"/>
    <property type="match status" value="1"/>
</dbReference>
<dbReference type="PROSITE" id="PS00395">
    <property type="entry name" value="ALANINE_RACEMASE"/>
    <property type="match status" value="1"/>
</dbReference>
<sequence length="382" mass="41775">MDSRPTIAEVDLAALRHNYDLVVRTIPRGCGILAVVKADAYGHGFMDIARELETLGVTAFGVAFLAEGIQLRKSGIDRPVLILGGVYPGQERKCVGFNLSTALFSLEQARVLDDAAGRLYRRARVHAKIDTGMGRLGIPHEEASAFFSALRELKHLDLEGIISHFASADELDEDGRRYSDLQASRFAAAVAAARHEGFEPRYVHIANSAAAFGMDLPFCNLVRPGIVLYGALPSGDFEGKMALKPIMRLRSSIAMLKWVEPGTSISYARRFTAPDRRLVASIPVGYADGYSRSLTNRGEVVVRGRRAPVVGTVCMDWIMADVTHVSGVTVGDEVTLLGCDQEGNCVRAEELAEWAGTIPYEIFCGISKRVPRVYLNPSIRHR</sequence>
<keyword id="KW-0413">Isomerase</keyword>
<keyword id="KW-0663">Pyridoxal phosphate</keyword>
<keyword id="KW-1185">Reference proteome</keyword>
<protein>
    <recommendedName>
        <fullName evidence="1">Alanine racemase</fullName>
        <ecNumber evidence="1">5.1.1.1</ecNumber>
    </recommendedName>
</protein>
<name>ALR_GEOSL</name>
<comment type="function">
    <text evidence="1">Catalyzes the interconversion of L-alanine and D-alanine. May also act on other amino acids.</text>
</comment>
<comment type="catalytic activity">
    <reaction evidence="1">
        <text>L-alanine = D-alanine</text>
        <dbReference type="Rhea" id="RHEA:20249"/>
        <dbReference type="ChEBI" id="CHEBI:57416"/>
        <dbReference type="ChEBI" id="CHEBI:57972"/>
        <dbReference type="EC" id="5.1.1.1"/>
    </reaction>
</comment>
<comment type="cofactor">
    <cofactor evidence="1">
        <name>pyridoxal 5'-phosphate</name>
        <dbReference type="ChEBI" id="CHEBI:597326"/>
    </cofactor>
</comment>
<comment type="pathway">
    <text evidence="1">Amino-acid biosynthesis; D-alanine biosynthesis; D-alanine from L-alanine: step 1/1.</text>
</comment>
<comment type="similarity">
    <text evidence="1">Belongs to the alanine racemase family.</text>
</comment>
<evidence type="ECO:0000255" key="1">
    <source>
        <dbReference type="HAMAP-Rule" id="MF_01201"/>
    </source>
</evidence>
<proteinExistence type="inferred from homology"/>
<feature type="chain" id="PRO_1000164598" description="Alanine racemase">
    <location>
        <begin position="1"/>
        <end position="382"/>
    </location>
</feature>
<feature type="active site" description="Proton acceptor; specific for D-alanine" evidence="1">
    <location>
        <position position="37"/>
    </location>
</feature>
<feature type="active site" description="Proton acceptor; specific for L-alanine" evidence="1">
    <location>
        <position position="267"/>
    </location>
</feature>
<feature type="binding site" evidence="1">
    <location>
        <position position="135"/>
    </location>
    <ligand>
        <name>substrate</name>
    </ligand>
</feature>
<feature type="binding site" evidence="1">
    <location>
        <position position="315"/>
    </location>
    <ligand>
        <name>substrate</name>
    </ligand>
</feature>
<feature type="modified residue" description="N6-(pyridoxal phosphate)lysine" evidence="1">
    <location>
        <position position="37"/>
    </location>
</feature>